<protein>
    <recommendedName>
        <fullName evidence="1">Protein PsbN</fullName>
    </recommendedName>
</protein>
<accession>Q5IHC2</accession>
<accession>B1VKC3</accession>
<name>PSBN_CRYJA</name>
<gene>
    <name evidence="1" type="primary">psbN</name>
</gene>
<keyword id="KW-0150">Chloroplast</keyword>
<keyword id="KW-0472">Membrane</keyword>
<keyword id="KW-0934">Plastid</keyword>
<keyword id="KW-0793">Thylakoid</keyword>
<keyword id="KW-0812">Transmembrane</keyword>
<keyword id="KW-1133">Transmembrane helix</keyword>
<evidence type="ECO:0000255" key="1">
    <source>
        <dbReference type="HAMAP-Rule" id="MF_00293"/>
    </source>
</evidence>
<proteinExistence type="inferred from homology"/>
<sequence>METATLVAISISCLLVSFTGYALYTAFGQPSEQLRDPFEEHED</sequence>
<geneLocation type="chloroplast"/>
<organism>
    <name type="scientific">Cryptomeria japonica</name>
    <name type="common">Japanese cedar</name>
    <name type="synonym">Cupressus japonica</name>
    <dbReference type="NCBI Taxonomy" id="3369"/>
    <lineage>
        <taxon>Eukaryota</taxon>
        <taxon>Viridiplantae</taxon>
        <taxon>Streptophyta</taxon>
        <taxon>Embryophyta</taxon>
        <taxon>Tracheophyta</taxon>
        <taxon>Spermatophyta</taxon>
        <taxon>Pinopsida</taxon>
        <taxon>Pinidae</taxon>
        <taxon>Conifers II</taxon>
        <taxon>Cupressales</taxon>
        <taxon>Cupressaceae</taxon>
        <taxon>Cryptomeria</taxon>
    </lineage>
</organism>
<dbReference type="EMBL" id="AY727379">
    <property type="protein sequence ID" value="AAW56521.1"/>
    <property type="molecule type" value="Genomic_DNA"/>
</dbReference>
<dbReference type="EMBL" id="AP009377">
    <property type="protein sequence ID" value="BAG16634.1"/>
    <property type="molecule type" value="Genomic_DNA"/>
</dbReference>
<dbReference type="RefSeq" id="YP_001806636.1">
    <property type="nucleotide sequence ID" value="NC_010548.1"/>
</dbReference>
<dbReference type="SMR" id="Q5IHC2"/>
<dbReference type="GeneID" id="6166568"/>
<dbReference type="KEGG" id="cjf:6166568"/>
<dbReference type="OrthoDB" id="1860403at2759"/>
<dbReference type="GO" id="GO:0009535">
    <property type="term" value="C:chloroplast thylakoid membrane"/>
    <property type="evidence" value="ECO:0007669"/>
    <property type="project" value="UniProtKB-SubCell"/>
</dbReference>
<dbReference type="GO" id="GO:0015979">
    <property type="term" value="P:photosynthesis"/>
    <property type="evidence" value="ECO:0007669"/>
    <property type="project" value="InterPro"/>
</dbReference>
<dbReference type="HAMAP" id="MF_00293">
    <property type="entry name" value="PSII_PsbN"/>
    <property type="match status" value="1"/>
</dbReference>
<dbReference type="InterPro" id="IPR003398">
    <property type="entry name" value="PSII_PsbN"/>
</dbReference>
<dbReference type="PANTHER" id="PTHR35326">
    <property type="entry name" value="PROTEIN PSBN"/>
    <property type="match status" value="1"/>
</dbReference>
<dbReference type="PANTHER" id="PTHR35326:SF3">
    <property type="entry name" value="PROTEIN PSBN"/>
    <property type="match status" value="1"/>
</dbReference>
<dbReference type="Pfam" id="PF02468">
    <property type="entry name" value="PsbN"/>
    <property type="match status" value="1"/>
</dbReference>
<feature type="chain" id="PRO_0000207890" description="Protein PsbN">
    <location>
        <begin position="1"/>
        <end position="43"/>
    </location>
</feature>
<feature type="transmembrane region" description="Helical" evidence="1">
    <location>
        <begin position="5"/>
        <end position="27"/>
    </location>
</feature>
<comment type="function">
    <text evidence="1">May play a role in photosystem I and II biogenesis.</text>
</comment>
<comment type="subcellular location">
    <subcellularLocation>
        <location evidence="1">Plastid</location>
        <location evidence="1">Chloroplast thylakoid membrane</location>
        <topology evidence="1">Single-pass membrane protein</topology>
    </subcellularLocation>
</comment>
<comment type="similarity">
    <text evidence="1">Belongs to the PsbN family.</text>
</comment>
<comment type="caution">
    <text evidence="1">Originally thought to be a component of PSII; based on experiments in Synechocystis, N.tabacum and barley, and its absence from PSII in T.elongatus and T.vulcanus, this is probably not true.</text>
</comment>
<reference key="1">
    <citation type="journal article" date="2005" name="Am. J. Bot.">
        <title>The tortoise and the hare II: relative utility of 21 noncoding chloroplast DNA sequences for phylogenetic analysis.</title>
        <authorList>
            <person name="Shaw J."/>
            <person name="Lickey E.B."/>
            <person name="Beck J.T."/>
            <person name="Farmer S.B."/>
            <person name="Liu W."/>
            <person name="Miller J."/>
            <person name="Siripun K.C."/>
            <person name="Winder C.T."/>
            <person name="Schilling E.E."/>
            <person name="Small R.L."/>
        </authorList>
        <dbReference type="AGRICOLA" id="IND43689705"/>
    </citation>
    <scope>NUCLEOTIDE SEQUENCE [GENOMIC DNA]</scope>
</reference>
<reference key="2">
    <citation type="journal article" date="2008" name="BMC Plant Biol.">
        <title>Complete nucleotide sequence of the Cryptomeria japonica D. Don. chloroplast genome and comparative chloroplast genomics: diversified genomic structure of coniferous species.</title>
        <authorList>
            <person name="Hirao T."/>
            <person name="Watanabe A."/>
            <person name="Kurita M."/>
            <person name="Kondo T."/>
            <person name="Takata K."/>
        </authorList>
    </citation>
    <scope>NUCLEOTIDE SEQUENCE [LARGE SCALE GENOMIC DNA]</scope>
</reference>